<feature type="signal peptide" evidence="2">
    <location>
        <begin position="1"/>
        <end position="21"/>
    </location>
</feature>
<feature type="chain" id="PRO_0000439254" description="Protein AimP" evidence="2">
    <location>
        <begin position="22"/>
        <end position="41"/>
    </location>
</feature>
<feature type="peptide" id="PRO_0000439255" description="Arbitrium peptide" evidence="2">
    <location>
        <begin position="36"/>
        <end position="41"/>
    </location>
</feature>
<feature type="site" description="Cleavage; by host" evidence="1">
    <location>
        <begin position="35"/>
        <end position="36"/>
    </location>
</feature>
<keyword id="KW-1252">Latency-replication decision</keyword>
<keyword id="KW-1185">Reference proteome</keyword>
<keyword id="KW-0964">Secreted</keyword>
<keyword id="KW-0732">Signal</keyword>
<gene>
    <name evidence="1" type="primary">aimP</name>
    <name type="synonym">yopL</name>
</gene>
<organism>
    <name type="scientific">Bacillus phage SPbeta</name>
    <name type="common">Bacillus phage SPBc2</name>
    <name type="synonym">Bacteriophage SP-beta</name>
    <dbReference type="NCBI Taxonomy" id="2932878"/>
    <lineage>
        <taxon>Viruses</taxon>
        <taxon>Duplodnaviria</taxon>
        <taxon>Heunggongvirae</taxon>
        <taxon>Uroviricota</taxon>
        <taxon>Caudoviricetes</taxon>
        <taxon>Spbetavirus</taxon>
        <taxon>Spbetavirus SPbeta</taxon>
    </lineage>
</organism>
<accession>O64095</accession>
<protein>
    <recommendedName>
        <fullName evidence="1">Protein AimP</fullName>
    </recommendedName>
    <alternativeName>
        <fullName>YopL protein</fullName>
    </alternativeName>
    <component>
        <recommendedName>
            <fullName evidence="1">Arbitrium peptide</fullName>
        </recommendedName>
    </component>
</protein>
<dbReference type="EMBL" id="AF020713">
    <property type="protein sequence ID" value="AAC13055.1"/>
    <property type="molecule type" value="Genomic_DNA"/>
</dbReference>
<dbReference type="PIR" id="T12846">
    <property type="entry name" value="T12846"/>
</dbReference>
<dbReference type="RefSeq" id="NP_046634.1">
    <property type="nucleotide sequence ID" value="NC_001884.1"/>
</dbReference>
<dbReference type="GeneID" id="1261412"/>
<dbReference type="KEGG" id="vg:1261412"/>
<dbReference type="Proteomes" id="UP000009091">
    <property type="component" value="Genome"/>
</dbReference>
<dbReference type="GO" id="GO:0005576">
    <property type="term" value="C:extracellular region"/>
    <property type="evidence" value="ECO:0007669"/>
    <property type="project" value="UniProtKB-SubCell"/>
</dbReference>
<dbReference type="GO" id="GO:0098689">
    <property type="term" value="P:latency-replication decision"/>
    <property type="evidence" value="ECO:0007669"/>
    <property type="project" value="UniProtKB-KW"/>
</dbReference>
<dbReference type="NCBIfam" id="NF033802">
    <property type="entry name" value="AimP_fam"/>
    <property type="match status" value="1"/>
</dbReference>
<organismHost>
    <name type="scientific">Bacillus pumilus</name>
    <name type="common">Bacillus mesentericus</name>
    <dbReference type="NCBI Taxonomy" id="1408"/>
</organismHost>
<organismHost>
    <name type="scientific">Bacillus subtilis</name>
    <dbReference type="NCBI Taxonomy" id="1423"/>
</organismHost>
<sequence>MKKLIMALVILGALGTSYISADSSIQQASGDYEVAGMPRGA</sequence>
<reference key="1">
    <citation type="journal article" date="1998" name="Proc. Natl. Acad. Sci. U.S.A.">
        <title>Introns and intein coding sequence in the ribonucleotide reductase genes of Bacillus subtilis temperate bacteriophage SPbeta.</title>
        <authorList>
            <person name="Lazarevic V."/>
            <person name="Soldo B."/>
            <person name="Duesterhoeft A."/>
            <person name="Hilbert H."/>
            <person name="Maueel C."/>
            <person name="Karamata D."/>
        </authorList>
    </citation>
    <scope>NUCLEOTIDE SEQUENCE [GENOMIC DNA]</scope>
</reference>
<comment type="function">
    <molecule>Protein AimP</molecule>
    <text evidence="1">Part of the latency-replication switch system which decides at the onset of infection whether to replicate and lyse the host or to lysogenize (latency) and keep the host viable.</text>
</comment>
<comment type="function">
    <molecule>Arbitrium peptide</molecule>
    <text evidence="1">Peptide which is released by the infected host bacteria and acts as a communication agent that affects the latency versus replication (lysogeny-lysis) decision for any new infecting virus from the same specie. High concentration of arbitrium peptide results in increased lysogeny in the upcoming viruses. The arbitrium peptide is secreted by infected bacteria and, after several cycles of infection, accumulates in the extracellular medium. When a virus from the same specie subsequently infects an uninfected bacterium which has internalized the peptide via its OPP transporter, the peptide will binds to the viral AimR transcriptional regulator and prevents AimR transcriptional activation of the aimX locus. Inhibition of aimX transcription promotes lysogeny.</text>
</comment>
<comment type="subunit">
    <molecule>Arbitrium peptide</molecule>
    <text evidence="1">Interacts with the viral AimR transcriptional regulator; this interaction changes the oligomeric state of AimR from an active dimer to an inactive monomer leading to lysogeny.</text>
</comment>
<comment type="subcellular location">
    <molecule>Arbitrium peptide</molecule>
    <subcellularLocation>
        <location evidence="1">Secreted</location>
    </subcellularLocation>
</comment>
<comment type="PTM">
    <molecule>Protein AimP</molecule>
    <text evidence="1">Cleaved by host extracellular proteases, thereby releasing the mature arbitrium peptide.</text>
</comment>
<name>AIMP_BPSPB</name>
<evidence type="ECO:0000250" key="1">
    <source>
        <dbReference type="UniProtKB" id="P0DOE2"/>
    </source>
</evidence>
<evidence type="ECO:0000255" key="2"/>
<proteinExistence type="inferred from homology"/>